<proteinExistence type="inferred from homology"/>
<feature type="chain" id="PRO_0000145727" description="Glyceraldehyde-3-phosphate dehydrogenase">
    <location>
        <begin position="1"/>
        <end position="341"/>
    </location>
</feature>
<feature type="active site" description="Nucleophile" evidence="2">
    <location>
        <position position="139"/>
    </location>
</feature>
<feature type="binding site" evidence="2">
    <location>
        <begin position="11"/>
        <end position="12"/>
    </location>
    <ligand>
        <name>NAD(+)</name>
        <dbReference type="ChEBI" id="CHEBI:57540"/>
    </ligand>
</feature>
<feature type="binding site" evidence="2">
    <location>
        <position position="109"/>
    </location>
    <ligand>
        <name>NAD(+)</name>
        <dbReference type="ChEBI" id="CHEBI:57540"/>
    </ligand>
</feature>
<feature type="binding site" evidence="2">
    <location>
        <begin position="138"/>
        <end position="140"/>
    </location>
    <ligand>
        <name>D-glyceraldehyde 3-phosphate</name>
        <dbReference type="ChEBI" id="CHEBI:59776"/>
    </ligand>
</feature>
<feature type="binding site" evidence="2">
    <location>
        <position position="167"/>
    </location>
    <ligand>
        <name>NAD(+)</name>
        <dbReference type="ChEBI" id="CHEBI:57540"/>
    </ligand>
</feature>
<feature type="binding site" evidence="1">
    <location>
        <position position="169"/>
    </location>
    <ligand>
        <name>D-glyceraldehyde 3-phosphate</name>
        <dbReference type="ChEBI" id="CHEBI:59776"/>
    </ligand>
</feature>
<feature type="binding site" evidence="2">
    <location>
        <begin position="192"/>
        <end position="193"/>
    </location>
    <ligand>
        <name>D-glyceraldehyde 3-phosphate</name>
        <dbReference type="ChEBI" id="CHEBI:59776"/>
    </ligand>
</feature>
<feature type="binding site" evidence="2">
    <location>
        <position position="299"/>
    </location>
    <ligand>
        <name>NAD(+)</name>
        <dbReference type="ChEBI" id="CHEBI:57540"/>
    </ligand>
</feature>
<sequence>MIKVGINGYGTIGKRVAYAASIQDDIHVSGIVKNTPDYMAYLASRSFNIYVPDDDKIKEFEDHGIKVKGTLNDLMESSDIIVDATPEGMGMENIKIYKKKRVKAIFQGGEKSNIGDASFNAYSNYNESFKREYTRVVSCNTTALARTLYPILNDYGIENLNVTLIRRATDPNDNRKGPINAIEPSMSFPSHHADDLKTVLNLNNVYTVALKAPTTLMHVHSIEVLLKDDAKIDDIMESWLKYNRILLIEGKDNFKSTAQIMDMARELRRDRGDLYEIAIWRDSVKVIDKRLYYVQAVHQESDVIPENIDAIRSLSGIDKNESIEKTDKSLRISGGIFYGKE</sequence>
<organism>
    <name type="scientific">Picrophilus torridus (strain ATCC 700027 / DSM 9790 / JCM 10055 / NBRC 100828 / KAW 2/3)</name>
    <dbReference type="NCBI Taxonomy" id="1122961"/>
    <lineage>
        <taxon>Archaea</taxon>
        <taxon>Methanobacteriati</taxon>
        <taxon>Thermoplasmatota</taxon>
        <taxon>Thermoplasmata</taxon>
        <taxon>Thermoplasmatales</taxon>
        <taxon>Picrophilaceae</taxon>
        <taxon>Picrophilus</taxon>
    </lineage>
</organism>
<dbReference type="EC" id="1.2.1.59" evidence="2"/>
<dbReference type="EMBL" id="AE017261">
    <property type="protein sequence ID" value="AAT43327.1"/>
    <property type="status" value="ALT_INIT"/>
    <property type="molecule type" value="Genomic_DNA"/>
</dbReference>
<dbReference type="RefSeq" id="WP_048059464.1">
    <property type="nucleotide sequence ID" value="NC_005877.1"/>
</dbReference>
<dbReference type="SMR" id="Q6L125"/>
<dbReference type="FunCoup" id="Q6L125">
    <property type="interactions" value="117"/>
</dbReference>
<dbReference type="STRING" id="263820.PTO0742"/>
<dbReference type="PaxDb" id="263820-PTO0742"/>
<dbReference type="GeneID" id="2845092"/>
<dbReference type="KEGG" id="pto:PTO0742"/>
<dbReference type="PATRIC" id="fig|263820.9.peg.777"/>
<dbReference type="eggNOG" id="arCOG00493">
    <property type="taxonomic scope" value="Archaea"/>
</dbReference>
<dbReference type="HOGENOM" id="CLU_069533_0_0_2"/>
<dbReference type="InParanoid" id="Q6L125"/>
<dbReference type="OrthoDB" id="295712at2157"/>
<dbReference type="UniPathway" id="UPA00109">
    <property type="reaction ID" value="UER00184"/>
</dbReference>
<dbReference type="Proteomes" id="UP000000438">
    <property type="component" value="Chromosome"/>
</dbReference>
<dbReference type="GO" id="GO:0005737">
    <property type="term" value="C:cytoplasm"/>
    <property type="evidence" value="ECO:0007669"/>
    <property type="project" value="UniProtKB-SubCell"/>
</dbReference>
<dbReference type="GO" id="GO:0008839">
    <property type="term" value="F:4-hydroxy-tetrahydrodipicolinate reductase"/>
    <property type="evidence" value="ECO:0007669"/>
    <property type="project" value="InterPro"/>
</dbReference>
<dbReference type="GO" id="GO:0004365">
    <property type="term" value="F:glyceraldehyde-3-phosphate dehydrogenase (NAD+) (phosphorylating) activity"/>
    <property type="evidence" value="ECO:0007669"/>
    <property type="project" value="UniProtKB-UniRule"/>
</dbReference>
<dbReference type="GO" id="GO:0047100">
    <property type="term" value="F:glyceraldehyde-3-phosphate dehydrogenase (NADP+) (phosphorylating) activity"/>
    <property type="evidence" value="ECO:0007669"/>
    <property type="project" value="RHEA"/>
</dbReference>
<dbReference type="GO" id="GO:0051287">
    <property type="term" value="F:NAD binding"/>
    <property type="evidence" value="ECO:0007669"/>
    <property type="project" value="InterPro"/>
</dbReference>
<dbReference type="GO" id="GO:0050661">
    <property type="term" value="F:NADP binding"/>
    <property type="evidence" value="ECO:0007669"/>
    <property type="project" value="InterPro"/>
</dbReference>
<dbReference type="GO" id="GO:0006096">
    <property type="term" value="P:glycolytic process"/>
    <property type="evidence" value="ECO:0007669"/>
    <property type="project" value="UniProtKB-UniRule"/>
</dbReference>
<dbReference type="GO" id="GO:0009089">
    <property type="term" value="P:lysine biosynthetic process via diaminopimelate"/>
    <property type="evidence" value="ECO:0007669"/>
    <property type="project" value="InterPro"/>
</dbReference>
<dbReference type="CDD" id="cd18127">
    <property type="entry name" value="GAPDH_II_C"/>
    <property type="match status" value="1"/>
</dbReference>
<dbReference type="CDD" id="cd02278">
    <property type="entry name" value="GAPDH_II_N"/>
    <property type="match status" value="1"/>
</dbReference>
<dbReference type="Gene3D" id="3.30.360.10">
    <property type="entry name" value="Dihydrodipicolinate Reductase, domain 2"/>
    <property type="match status" value="1"/>
</dbReference>
<dbReference type="Gene3D" id="3.40.50.720">
    <property type="entry name" value="NAD(P)-binding Rossmann-like Domain"/>
    <property type="match status" value="1"/>
</dbReference>
<dbReference type="HAMAP" id="MF_00559">
    <property type="entry name" value="G3P_dehdrog_arch"/>
    <property type="match status" value="1"/>
</dbReference>
<dbReference type="InterPro" id="IPR000846">
    <property type="entry name" value="DapB_N"/>
</dbReference>
<dbReference type="InterPro" id="IPR020831">
    <property type="entry name" value="GlycerAld/Erythrose_P_DH"/>
</dbReference>
<dbReference type="InterPro" id="IPR020830">
    <property type="entry name" value="GlycerAld_3-P_DH_AS"/>
</dbReference>
<dbReference type="InterPro" id="IPR020829">
    <property type="entry name" value="GlycerAld_3-P_DH_cat"/>
</dbReference>
<dbReference type="InterPro" id="IPR020828">
    <property type="entry name" value="GlycerAld_3-P_DH_NAD(P)-bd"/>
</dbReference>
<dbReference type="InterPro" id="IPR006436">
    <property type="entry name" value="Glyceraldehyde-3-P_DH_2_arc"/>
</dbReference>
<dbReference type="InterPro" id="IPR036291">
    <property type="entry name" value="NAD(P)-bd_dom_sf"/>
</dbReference>
<dbReference type="NCBIfam" id="TIGR01546">
    <property type="entry name" value="GAPDH-II_archae"/>
    <property type="match status" value="1"/>
</dbReference>
<dbReference type="NCBIfam" id="NF003251">
    <property type="entry name" value="PRK04207.1"/>
    <property type="match status" value="1"/>
</dbReference>
<dbReference type="Pfam" id="PF01113">
    <property type="entry name" value="DapB_N"/>
    <property type="match status" value="1"/>
</dbReference>
<dbReference type="Pfam" id="PF02800">
    <property type="entry name" value="Gp_dh_C"/>
    <property type="match status" value="1"/>
</dbReference>
<dbReference type="PIRSF" id="PIRSF000149">
    <property type="entry name" value="GAP_DH"/>
    <property type="match status" value="1"/>
</dbReference>
<dbReference type="SMART" id="SM00846">
    <property type="entry name" value="Gp_dh_N"/>
    <property type="match status" value="1"/>
</dbReference>
<dbReference type="SUPFAM" id="SSF55347">
    <property type="entry name" value="Glyceraldehyde-3-phosphate dehydrogenase-like, C-terminal domain"/>
    <property type="match status" value="1"/>
</dbReference>
<dbReference type="SUPFAM" id="SSF51735">
    <property type="entry name" value="NAD(P)-binding Rossmann-fold domains"/>
    <property type="match status" value="1"/>
</dbReference>
<dbReference type="PROSITE" id="PS00071">
    <property type="entry name" value="GAPDH"/>
    <property type="match status" value="1"/>
</dbReference>
<gene>
    <name evidence="2" type="primary">gap</name>
    <name type="ordered locus">PTO0742</name>
</gene>
<comment type="catalytic activity">
    <reaction evidence="2">
        <text>D-glyceraldehyde 3-phosphate + phosphate + NADP(+) = (2R)-3-phospho-glyceroyl phosphate + NADPH + H(+)</text>
        <dbReference type="Rhea" id="RHEA:10296"/>
        <dbReference type="ChEBI" id="CHEBI:15378"/>
        <dbReference type="ChEBI" id="CHEBI:43474"/>
        <dbReference type="ChEBI" id="CHEBI:57604"/>
        <dbReference type="ChEBI" id="CHEBI:57783"/>
        <dbReference type="ChEBI" id="CHEBI:58349"/>
        <dbReference type="ChEBI" id="CHEBI:59776"/>
        <dbReference type="EC" id="1.2.1.59"/>
    </reaction>
</comment>
<comment type="catalytic activity">
    <reaction evidence="2">
        <text>D-glyceraldehyde 3-phosphate + phosphate + NAD(+) = (2R)-3-phospho-glyceroyl phosphate + NADH + H(+)</text>
        <dbReference type="Rhea" id="RHEA:10300"/>
        <dbReference type="ChEBI" id="CHEBI:15378"/>
        <dbReference type="ChEBI" id="CHEBI:43474"/>
        <dbReference type="ChEBI" id="CHEBI:57540"/>
        <dbReference type="ChEBI" id="CHEBI:57604"/>
        <dbReference type="ChEBI" id="CHEBI:57945"/>
        <dbReference type="ChEBI" id="CHEBI:59776"/>
        <dbReference type="EC" id="1.2.1.59"/>
    </reaction>
</comment>
<comment type="pathway">
    <text evidence="2">Carbohydrate degradation; glycolysis; pyruvate from D-glyceraldehyde 3-phosphate: step 1/5.</text>
</comment>
<comment type="subunit">
    <text evidence="2">Homotetramer.</text>
</comment>
<comment type="subcellular location">
    <subcellularLocation>
        <location evidence="2">Cytoplasm</location>
    </subcellularLocation>
</comment>
<comment type="similarity">
    <text evidence="2">Belongs to the glyceraldehyde-3-phosphate dehydrogenase family.</text>
</comment>
<comment type="sequence caution" evidence="3">
    <conflict type="erroneous initiation">
        <sequence resource="EMBL-CDS" id="AAT43327"/>
    </conflict>
</comment>
<name>G3P_PICTO</name>
<reference key="1">
    <citation type="journal article" date="2004" name="Proc. Natl. Acad. Sci. U.S.A.">
        <title>Genome sequence of Picrophilus torridus and its implications for life around pH 0.</title>
        <authorList>
            <person name="Fuetterer O."/>
            <person name="Angelov A."/>
            <person name="Liesegang H."/>
            <person name="Gottschalk G."/>
            <person name="Schleper C."/>
            <person name="Schepers B."/>
            <person name="Dock C."/>
            <person name="Antranikian G."/>
            <person name="Liebl W."/>
        </authorList>
    </citation>
    <scope>NUCLEOTIDE SEQUENCE [LARGE SCALE GENOMIC DNA]</scope>
    <source>
        <strain>ATCC 700027 / DSM 9790 / JCM 10055 / NBRC 100828 / KAW 2/3</strain>
    </source>
</reference>
<protein>
    <recommendedName>
        <fullName evidence="2">Glyceraldehyde-3-phosphate dehydrogenase</fullName>
        <shortName evidence="2">GAPDH</shortName>
        <ecNumber evidence="2">1.2.1.59</ecNumber>
    </recommendedName>
    <alternativeName>
        <fullName evidence="2">NAD(P)-dependent glyceraldehyde-3-phosphate dehydrogenase</fullName>
    </alternativeName>
</protein>
<keyword id="KW-0963">Cytoplasm</keyword>
<keyword id="KW-0324">Glycolysis</keyword>
<keyword id="KW-0520">NAD</keyword>
<keyword id="KW-0521">NADP</keyword>
<keyword id="KW-0560">Oxidoreductase</keyword>
<evidence type="ECO:0000250" key="1"/>
<evidence type="ECO:0000255" key="2">
    <source>
        <dbReference type="HAMAP-Rule" id="MF_00559"/>
    </source>
</evidence>
<evidence type="ECO:0000305" key="3"/>
<accession>Q6L125</accession>